<proteinExistence type="inferred from homology"/>
<accession>B7JRX3</accession>
<name>ACCA_BACC0</name>
<reference key="1">
    <citation type="submission" date="2008-10" db="EMBL/GenBank/DDBJ databases">
        <title>Genome sequence of Bacillus cereus AH820.</title>
        <authorList>
            <person name="Dodson R.J."/>
            <person name="Durkin A.S."/>
            <person name="Rosovitz M.J."/>
            <person name="Rasko D.A."/>
            <person name="Hoffmaster A."/>
            <person name="Ravel J."/>
            <person name="Sutton G."/>
        </authorList>
    </citation>
    <scope>NUCLEOTIDE SEQUENCE [LARGE SCALE GENOMIC DNA]</scope>
    <source>
        <strain>AH820</strain>
    </source>
</reference>
<feature type="chain" id="PRO_1000134456" description="Acetyl-coenzyme A carboxylase carboxyl transferase subunit alpha">
    <location>
        <begin position="1"/>
        <end position="324"/>
    </location>
</feature>
<feature type="domain" description="CoA carboxyltransferase C-terminal" evidence="2">
    <location>
        <begin position="37"/>
        <end position="291"/>
    </location>
</feature>
<comment type="function">
    <text evidence="1">Component of the acetyl coenzyme A carboxylase (ACC) complex. First, biotin carboxylase catalyzes the carboxylation of biotin on its carrier protein (BCCP) and then the CO(2) group is transferred by the carboxyltransferase to acetyl-CoA to form malonyl-CoA.</text>
</comment>
<comment type="catalytic activity">
    <reaction evidence="1">
        <text>N(6)-carboxybiotinyl-L-lysyl-[protein] + acetyl-CoA = N(6)-biotinyl-L-lysyl-[protein] + malonyl-CoA</text>
        <dbReference type="Rhea" id="RHEA:54728"/>
        <dbReference type="Rhea" id="RHEA-COMP:10505"/>
        <dbReference type="Rhea" id="RHEA-COMP:10506"/>
        <dbReference type="ChEBI" id="CHEBI:57288"/>
        <dbReference type="ChEBI" id="CHEBI:57384"/>
        <dbReference type="ChEBI" id="CHEBI:83144"/>
        <dbReference type="ChEBI" id="CHEBI:83145"/>
        <dbReference type="EC" id="2.1.3.15"/>
    </reaction>
</comment>
<comment type="pathway">
    <text evidence="1">Lipid metabolism; malonyl-CoA biosynthesis; malonyl-CoA from acetyl-CoA: step 1/1.</text>
</comment>
<comment type="subunit">
    <text evidence="1">Acetyl-CoA carboxylase is a heterohexamer composed of biotin carboxyl carrier protein (AccB), biotin carboxylase (AccC) and two subunits each of ACCase subunit alpha (AccA) and ACCase subunit beta (AccD).</text>
</comment>
<comment type="subcellular location">
    <subcellularLocation>
        <location evidence="1">Cytoplasm</location>
    </subcellularLocation>
</comment>
<comment type="similarity">
    <text evidence="1">Belongs to the AccA family.</text>
</comment>
<organism>
    <name type="scientific">Bacillus cereus (strain AH820)</name>
    <dbReference type="NCBI Taxonomy" id="405535"/>
    <lineage>
        <taxon>Bacteria</taxon>
        <taxon>Bacillati</taxon>
        <taxon>Bacillota</taxon>
        <taxon>Bacilli</taxon>
        <taxon>Bacillales</taxon>
        <taxon>Bacillaceae</taxon>
        <taxon>Bacillus</taxon>
        <taxon>Bacillus cereus group</taxon>
    </lineage>
</organism>
<gene>
    <name evidence="1" type="primary">accA</name>
    <name type="ordered locus">BCAH820_4715</name>
</gene>
<protein>
    <recommendedName>
        <fullName evidence="1">Acetyl-coenzyme A carboxylase carboxyl transferase subunit alpha</fullName>
        <shortName evidence="1">ACCase subunit alpha</shortName>
        <shortName evidence="1">Acetyl-CoA carboxylase carboxyltransferase subunit alpha</shortName>
        <ecNumber evidence="1">2.1.3.15</ecNumber>
    </recommendedName>
</protein>
<dbReference type="EC" id="2.1.3.15" evidence="1"/>
<dbReference type="EMBL" id="CP001283">
    <property type="protein sequence ID" value="ACK88558.1"/>
    <property type="molecule type" value="Genomic_DNA"/>
</dbReference>
<dbReference type="RefSeq" id="WP_000818794.1">
    <property type="nucleotide sequence ID" value="NC_011773.1"/>
</dbReference>
<dbReference type="SMR" id="B7JRX3"/>
<dbReference type="GeneID" id="75087757"/>
<dbReference type="KEGG" id="bcu:BCAH820_4715"/>
<dbReference type="HOGENOM" id="CLU_015486_0_2_9"/>
<dbReference type="UniPathway" id="UPA00655">
    <property type="reaction ID" value="UER00711"/>
</dbReference>
<dbReference type="Proteomes" id="UP000001363">
    <property type="component" value="Chromosome"/>
</dbReference>
<dbReference type="GO" id="GO:0009317">
    <property type="term" value="C:acetyl-CoA carboxylase complex"/>
    <property type="evidence" value="ECO:0007669"/>
    <property type="project" value="InterPro"/>
</dbReference>
<dbReference type="GO" id="GO:0003989">
    <property type="term" value="F:acetyl-CoA carboxylase activity"/>
    <property type="evidence" value="ECO:0007669"/>
    <property type="project" value="InterPro"/>
</dbReference>
<dbReference type="GO" id="GO:0005524">
    <property type="term" value="F:ATP binding"/>
    <property type="evidence" value="ECO:0007669"/>
    <property type="project" value="UniProtKB-KW"/>
</dbReference>
<dbReference type="GO" id="GO:0016743">
    <property type="term" value="F:carboxyl- or carbamoyltransferase activity"/>
    <property type="evidence" value="ECO:0007669"/>
    <property type="project" value="UniProtKB-UniRule"/>
</dbReference>
<dbReference type="GO" id="GO:0006633">
    <property type="term" value="P:fatty acid biosynthetic process"/>
    <property type="evidence" value="ECO:0007669"/>
    <property type="project" value="UniProtKB-KW"/>
</dbReference>
<dbReference type="GO" id="GO:2001295">
    <property type="term" value="P:malonyl-CoA biosynthetic process"/>
    <property type="evidence" value="ECO:0007669"/>
    <property type="project" value="UniProtKB-UniRule"/>
</dbReference>
<dbReference type="Gene3D" id="3.90.226.10">
    <property type="entry name" value="2-enoyl-CoA Hydratase, Chain A, domain 1"/>
    <property type="match status" value="1"/>
</dbReference>
<dbReference type="HAMAP" id="MF_00823">
    <property type="entry name" value="AcetylCoA_CT_alpha"/>
    <property type="match status" value="1"/>
</dbReference>
<dbReference type="InterPro" id="IPR001095">
    <property type="entry name" value="Acetyl_CoA_COase_a_su"/>
</dbReference>
<dbReference type="InterPro" id="IPR029045">
    <property type="entry name" value="ClpP/crotonase-like_dom_sf"/>
</dbReference>
<dbReference type="InterPro" id="IPR011763">
    <property type="entry name" value="COA_CT_C"/>
</dbReference>
<dbReference type="NCBIfam" id="TIGR00513">
    <property type="entry name" value="accA"/>
    <property type="match status" value="1"/>
</dbReference>
<dbReference type="NCBIfam" id="NF041504">
    <property type="entry name" value="AccA_sub"/>
    <property type="match status" value="1"/>
</dbReference>
<dbReference type="NCBIfam" id="NF004344">
    <property type="entry name" value="PRK05724.1"/>
    <property type="match status" value="1"/>
</dbReference>
<dbReference type="PANTHER" id="PTHR42853">
    <property type="entry name" value="ACETYL-COENZYME A CARBOXYLASE CARBOXYL TRANSFERASE SUBUNIT ALPHA"/>
    <property type="match status" value="1"/>
</dbReference>
<dbReference type="PANTHER" id="PTHR42853:SF3">
    <property type="entry name" value="ACETYL-COENZYME A CARBOXYLASE CARBOXYL TRANSFERASE SUBUNIT ALPHA, CHLOROPLASTIC"/>
    <property type="match status" value="1"/>
</dbReference>
<dbReference type="Pfam" id="PF03255">
    <property type="entry name" value="ACCA"/>
    <property type="match status" value="1"/>
</dbReference>
<dbReference type="PRINTS" id="PR01069">
    <property type="entry name" value="ACCCTRFRASEA"/>
</dbReference>
<dbReference type="SUPFAM" id="SSF52096">
    <property type="entry name" value="ClpP/crotonase"/>
    <property type="match status" value="1"/>
</dbReference>
<dbReference type="PROSITE" id="PS50989">
    <property type="entry name" value="COA_CT_CTER"/>
    <property type="match status" value="1"/>
</dbReference>
<sequence>MAELEFEKPVVELRNKIRELKDYTKNSQMDFSEEIRILEDKLENLEEDIYGNMKVWDRVQIARHAERPTTLDYIEHLFTDFFECHGDRLFGDDAAIVGGIAKYKGMPVTVIGHQRGKDTKENIRRNFGMPHPEGYRKALRLMKQAEKFNRPIICFIDTKGAYPGKAAEERGQSEAIARNLFEMAGLTVPVICIVIGEGGSGGALGLGVGDYIHMLENSTYSVITPEGAAAILWKDAGKAKEAAEAMRITAADLKELGVIDEIIPEAKGGAHRNVLKQSENIDLMLRKTFEQLNGISKDELIEKRYEKYMKIGQVSFSNASIWIK</sequence>
<evidence type="ECO:0000255" key="1">
    <source>
        <dbReference type="HAMAP-Rule" id="MF_00823"/>
    </source>
</evidence>
<evidence type="ECO:0000255" key="2">
    <source>
        <dbReference type="PROSITE-ProRule" id="PRU01137"/>
    </source>
</evidence>
<keyword id="KW-0067">ATP-binding</keyword>
<keyword id="KW-0963">Cytoplasm</keyword>
<keyword id="KW-0275">Fatty acid biosynthesis</keyword>
<keyword id="KW-0276">Fatty acid metabolism</keyword>
<keyword id="KW-0444">Lipid biosynthesis</keyword>
<keyword id="KW-0443">Lipid metabolism</keyword>
<keyword id="KW-0547">Nucleotide-binding</keyword>
<keyword id="KW-0808">Transferase</keyword>